<name>SYY_DESPS</name>
<protein>
    <recommendedName>
        <fullName evidence="1">Tyrosine--tRNA ligase</fullName>
        <ecNumber evidence="1">6.1.1.1</ecNumber>
    </recommendedName>
    <alternativeName>
        <fullName evidence="1">Tyrosyl-tRNA synthetase</fullName>
        <shortName evidence="1">TyrRS</shortName>
    </alternativeName>
</protein>
<feature type="chain" id="PRO_0000236716" description="Tyrosine--tRNA ligase">
    <location>
        <begin position="1"/>
        <end position="405"/>
    </location>
</feature>
<feature type="domain" description="S4 RNA-binding" evidence="1">
    <location>
        <begin position="343"/>
        <end position="404"/>
    </location>
</feature>
<feature type="short sequence motif" description="'HIGH' region">
    <location>
        <begin position="48"/>
        <end position="57"/>
    </location>
</feature>
<feature type="short sequence motif" description="'KMSKS' region">
    <location>
        <begin position="232"/>
        <end position="236"/>
    </location>
</feature>
<feature type="binding site" evidence="1">
    <location>
        <position position="235"/>
    </location>
    <ligand>
        <name>ATP</name>
        <dbReference type="ChEBI" id="CHEBI:30616"/>
    </ligand>
</feature>
<gene>
    <name evidence="1" type="primary">tyrS</name>
    <name type="ordered locus">DP2869</name>
</gene>
<sequence>MDMPSLEEQIELIERGCVDCISRDELVKKLKKSAETGIPLKVKAGFDPTAPDLHLGHTVLLQKLKQFQDLGHQVIFLIGDFTGMIGDPTGKSETRKALTVEQVAENAETYKKQVFKILDPEKTTVAFNSTWLSKLTAHEMIQLASELTVARMLEREDFKNRYESGKPISIHEFMYPLIQGYDSVALEADVEIGGTDQRFNVLMGRDLQRSRGQAPQVVLTLPLLEGLDGVNKMSKSLGNYIGITEDADSIYGKVLSVSDDLMFRYYELLSDLTTAEIADLRAQMEAGTLHPKEVKKQLARELTARYHSEEAAIAAEQNFENVFKKGGIPEDLPEYQVSLDEPIWLPKLLADAEMVKSTSEGRRMIKQGAVSLDGEKAVDESMLISPEGEVLIKVGKRRFVKVIFA</sequence>
<dbReference type="EC" id="6.1.1.1" evidence="1"/>
<dbReference type="EMBL" id="CR522870">
    <property type="protein sequence ID" value="CAG37598.1"/>
    <property type="molecule type" value="Genomic_DNA"/>
</dbReference>
<dbReference type="SMR" id="Q6AJ82"/>
<dbReference type="STRING" id="177439.DP2869"/>
<dbReference type="KEGG" id="dps:DP2869"/>
<dbReference type="eggNOG" id="COG0162">
    <property type="taxonomic scope" value="Bacteria"/>
</dbReference>
<dbReference type="HOGENOM" id="CLU_024003_5_0_7"/>
<dbReference type="Proteomes" id="UP000000602">
    <property type="component" value="Chromosome"/>
</dbReference>
<dbReference type="GO" id="GO:0005829">
    <property type="term" value="C:cytosol"/>
    <property type="evidence" value="ECO:0007669"/>
    <property type="project" value="TreeGrafter"/>
</dbReference>
<dbReference type="GO" id="GO:0005524">
    <property type="term" value="F:ATP binding"/>
    <property type="evidence" value="ECO:0007669"/>
    <property type="project" value="UniProtKB-UniRule"/>
</dbReference>
<dbReference type="GO" id="GO:0003723">
    <property type="term" value="F:RNA binding"/>
    <property type="evidence" value="ECO:0007669"/>
    <property type="project" value="UniProtKB-KW"/>
</dbReference>
<dbReference type="GO" id="GO:0004831">
    <property type="term" value="F:tyrosine-tRNA ligase activity"/>
    <property type="evidence" value="ECO:0007669"/>
    <property type="project" value="UniProtKB-UniRule"/>
</dbReference>
<dbReference type="GO" id="GO:0006437">
    <property type="term" value="P:tyrosyl-tRNA aminoacylation"/>
    <property type="evidence" value="ECO:0007669"/>
    <property type="project" value="UniProtKB-UniRule"/>
</dbReference>
<dbReference type="CDD" id="cd00165">
    <property type="entry name" value="S4"/>
    <property type="match status" value="1"/>
</dbReference>
<dbReference type="CDD" id="cd00805">
    <property type="entry name" value="TyrRS_core"/>
    <property type="match status" value="1"/>
</dbReference>
<dbReference type="FunFam" id="1.10.240.10:FF:000006">
    <property type="entry name" value="Tyrosine--tRNA ligase"/>
    <property type="match status" value="1"/>
</dbReference>
<dbReference type="FunFam" id="3.40.50.620:FF:000061">
    <property type="entry name" value="Tyrosine--tRNA ligase"/>
    <property type="match status" value="1"/>
</dbReference>
<dbReference type="Gene3D" id="3.40.50.620">
    <property type="entry name" value="HUPs"/>
    <property type="match status" value="1"/>
</dbReference>
<dbReference type="Gene3D" id="3.10.290.10">
    <property type="entry name" value="RNA-binding S4 domain"/>
    <property type="match status" value="1"/>
</dbReference>
<dbReference type="Gene3D" id="1.10.240.10">
    <property type="entry name" value="Tyrosyl-Transfer RNA Synthetase"/>
    <property type="match status" value="1"/>
</dbReference>
<dbReference type="HAMAP" id="MF_02007">
    <property type="entry name" value="Tyr_tRNA_synth_type2"/>
    <property type="match status" value="1"/>
</dbReference>
<dbReference type="InterPro" id="IPR001412">
    <property type="entry name" value="aa-tRNA-synth_I_CS"/>
</dbReference>
<dbReference type="InterPro" id="IPR002305">
    <property type="entry name" value="aa-tRNA-synth_Ic"/>
</dbReference>
<dbReference type="InterPro" id="IPR014729">
    <property type="entry name" value="Rossmann-like_a/b/a_fold"/>
</dbReference>
<dbReference type="InterPro" id="IPR002942">
    <property type="entry name" value="S4_RNA-bd"/>
</dbReference>
<dbReference type="InterPro" id="IPR036986">
    <property type="entry name" value="S4_RNA-bd_sf"/>
</dbReference>
<dbReference type="InterPro" id="IPR002307">
    <property type="entry name" value="Tyr-tRNA-ligase"/>
</dbReference>
<dbReference type="InterPro" id="IPR024088">
    <property type="entry name" value="Tyr-tRNA-ligase_bac-type"/>
</dbReference>
<dbReference type="InterPro" id="IPR024108">
    <property type="entry name" value="Tyr-tRNA-ligase_bac_2"/>
</dbReference>
<dbReference type="NCBIfam" id="TIGR00234">
    <property type="entry name" value="tyrS"/>
    <property type="match status" value="1"/>
</dbReference>
<dbReference type="PANTHER" id="PTHR11766:SF1">
    <property type="entry name" value="TYROSINE--TRNA LIGASE"/>
    <property type="match status" value="1"/>
</dbReference>
<dbReference type="PANTHER" id="PTHR11766">
    <property type="entry name" value="TYROSYL-TRNA SYNTHETASE"/>
    <property type="match status" value="1"/>
</dbReference>
<dbReference type="Pfam" id="PF01479">
    <property type="entry name" value="S4"/>
    <property type="match status" value="1"/>
</dbReference>
<dbReference type="Pfam" id="PF00579">
    <property type="entry name" value="tRNA-synt_1b"/>
    <property type="match status" value="1"/>
</dbReference>
<dbReference type="PRINTS" id="PR01040">
    <property type="entry name" value="TRNASYNTHTYR"/>
</dbReference>
<dbReference type="SMART" id="SM00363">
    <property type="entry name" value="S4"/>
    <property type="match status" value="1"/>
</dbReference>
<dbReference type="SUPFAM" id="SSF55174">
    <property type="entry name" value="Alpha-L RNA-binding motif"/>
    <property type="match status" value="1"/>
</dbReference>
<dbReference type="SUPFAM" id="SSF52374">
    <property type="entry name" value="Nucleotidylyl transferase"/>
    <property type="match status" value="1"/>
</dbReference>
<dbReference type="PROSITE" id="PS00178">
    <property type="entry name" value="AA_TRNA_LIGASE_I"/>
    <property type="match status" value="1"/>
</dbReference>
<dbReference type="PROSITE" id="PS50889">
    <property type="entry name" value="S4"/>
    <property type="match status" value="1"/>
</dbReference>
<comment type="function">
    <text evidence="1">Catalyzes the attachment of tyrosine to tRNA(Tyr) in a two-step reaction: tyrosine is first activated by ATP to form Tyr-AMP and then transferred to the acceptor end of tRNA(Tyr).</text>
</comment>
<comment type="catalytic activity">
    <reaction evidence="1">
        <text>tRNA(Tyr) + L-tyrosine + ATP = L-tyrosyl-tRNA(Tyr) + AMP + diphosphate + H(+)</text>
        <dbReference type="Rhea" id="RHEA:10220"/>
        <dbReference type="Rhea" id="RHEA-COMP:9706"/>
        <dbReference type="Rhea" id="RHEA-COMP:9707"/>
        <dbReference type="ChEBI" id="CHEBI:15378"/>
        <dbReference type="ChEBI" id="CHEBI:30616"/>
        <dbReference type="ChEBI" id="CHEBI:33019"/>
        <dbReference type="ChEBI" id="CHEBI:58315"/>
        <dbReference type="ChEBI" id="CHEBI:78442"/>
        <dbReference type="ChEBI" id="CHEBI:78536"/>
        <dbReference type="ChEBI" id="CHEBI:456215"/>
        <dbReference type="EC" id="6.1.1.1"/>
    </reaction>
</comment>
<comment type="subunit">
    <text evidence="1">Homodimer.</text>
</comment>
<comment type="subcellular location">
    <subcellularLocation>
        <location evidence="1">Cytoplasm</location>
    </subcellularLocation>
</comment>
<comment type="similarity">
    <text evidence="1">Belongs to the class-I aminoacyl-tRNA synthetase family. TyrS type 2 subfamily.</text>
</comment>
<evidence type="ECO:0000255" key="1">
    <source>
        <dbReference type="HAMAP-Rule" id="MF_02007"/>
    </source>
</evidence>
<reference key="1">
    <citation type="journal article" date="2004" name="Environ. Microbiol.">
        <title>The genome of Desulfotalea psychrophila, a sulfate-reducing bacterium from permanently cold Arctic sediments.</title>
        <authorList>
            <person name="Rabus R."/>
            <person name="Ruepp A."/>
            <person name="Frickey T."/>
            <person name="Rattei T."/>
            <person name="Fartmann B."/>
            <person name="Stark M."/>
            <person name="Bauer M."/>
            <person name="Zibat A."/>
            <person name="Lombardot T."/>
            <person name="Becker I."/>
            <person name="Amann J."/>
            <person name="Gellner K."/>
            <person name="Teeling H."/>
            <person name="Leuschner W.D."/>
            <person name="Gloeckner F.-O."/>
            <person name="Lupas A.N."/>
            <person name="Amann R."/>
            <person name="Klenk H.-P."/>
        </authorList>
    </citation>
    <scope>NUCLEOTIDE SEQUENCE [LARGE SCALE GENOMIC DNA]</scope>
    <source>
        <strain>DSM 12343 / LSv54</strain>
    </source>
</reference>
<organism>
    <name type="scientific">Desulfotalea psychrophila (strain LSv54 / DSM 12343)</name>
    <dbReference type="NCBI Taxonomy" id="177439"/>
    <lineage>
        <taxon>Bacteria</taxon>
        <taxon>Pseudomonadati</taxon>
        <taxon>Thermodesulfobacteriota</taxon>
        <taxon>Desulfobulbia</taxon>
        <taxon>Desulfobulbales</taxon>
        <taxon>Desulfocapsaceae</taxon>
        <taxon>Desulfotalea</taxon>
    </lineage>
</organism>
<accession>Q6AJ82</accession>
<keyword id="KW-0030">Aminoacyl-tRNA synthetase</keyword>
<keyword id="KW-0067">ATP-binding</keyword>
<keyword id="KW-0963">Cytoplasm</keyword>
<keyword id="KW-0436">Ligase</keyword>
<keyword id="KW-0547">Nucleotide-binding</keyword>
<keyword id="KW-0648">Protein biosynthesis</keyword>
<keyword id="KW-1185">Reference proteome</keyword>
<keyword id="KW-0694">RNA-binding</keyword>
<proteinExistence type="inferred from homology"/>